<evidence type="ECO:0000255" key="1">
    <source>
        <dbReference type="HAMAP-Rule" id="MF_00102"/>
    </source>
</evidence>
<evidence type="ECO:0000305" key="2"/>
<dbReference type="EC" id="1.17.1.8" evidence="1"/>
<dbReference type="EMBL" id="CP000325">
    <property type="protein sequence ID" value="ABL04577.1"/>
    <property type="molecule type" value="Genomic_DNA"/>
</dbReference>
<dbReference type="RefSeq" id="WP_011740194.1">
    <property type="nucleotide sequence ID" value="NC_008611.1"/>
</dbReference>
<dbReference type="SMR" id="A0PQF8"/>
<dbReference type="KEGG" id="mul:MUL_2164"/>
<dbReference type="eggNOG" id="COG0289">
    <property type="taxonomic scope" value="Bacteria"/>
</dbReference>
<dbReference type="HOGENOM" id="CLU_047479_0_1_11"/>
<dbReference type="UniPathway" id="UPA00034">
    <property type="reaction ID" value="UER00018"/>
</dbReference>
<dbReference type="Proteomes" id="UP000000765">
    <property type="component" value="Chromosome"/>
</dbReference>
<dbReference type="GO" id="GO:0005829">
    <property type="term" value="C:cytosol"/>
    <property type="evidence" value="ECO:0007669"/>
    <property type="project" value="TreeGrafter"/>
</dbReference>
<dbReference type="GO" id="GO:0008839">
    <property type="term" value="F:4-hydroxy-tetrahydrodipicolinate reductase"/>
    <property type="evidence" value="ECO:0007669"/>
    <property type="project" value="UniProtKB-EC"/>
</dbReference>
<dbReference type="GO" id="GO:0051287">
    <property type="term" value="F:NAD binding"/>
    <property type="evidence" value="ECO:0007669"/>
    <property type="project" value="UniProtKB-UniRule"/>
</dbReference>
<dbReference type="GO" id="GO:0050661">
    <property type="term" value="F:NADP binding"/>
    <property type="evidence" value="ECO:0007669"/>
    <property type="project" value="UniProtKB-UniRule"/>
</dbReference>
<dbReference type="GO" id="GO:0016726">
    <property type="term" value="F:oxidoreductase activity, acting on CH or CH2 groups, NAD or NADP as acceptor"/>
    <property type="evidence" value="ECO:0007669"/>
    <property type="project" value="UniProtKB-UniRule"/>
</dbReference>
<dbReference type="GO" id="GO:0019877">
    <property type="term" value="P:diaminopimelate biosynthetic process"/>
    <property type="evidence" value="ECO:0007669"/>
    <property type="project" value="UniProtKB-UniRule"/>
</dbReference>
<dbReference type="GO" id="GO:0009089">
    <property type="term" value="P:lysine biosynthetic process via diaminopimelate"/>
    <property type="evidence" value="ECO:0007669"/>
    <property type="project" value="UniProtKB-UniRule"/>
</dbReference>
<dbReference type="CDD" id="cd02274">
    <property type="entry name" value="DHDPR_N"/>
    <property type="match status" value="1"/>
</dbReference>
<dbReference type="FunFam" id="3.30.360.10:FF:000009">
    <property type="entry name" value="4-hydroxy-tetrahydrodipicolinate reductase"/>
    <property type="match status" value="1"/>
</dbReference>
<dbReference type="Gene3D" id="3.30.360.10">
    <property type="entry name" value="Dihydrodipicolinate Reductase, domain 2"/>
    <property type="match status" value="1"/>
</dbReference>
<dbReference type="Gene3D" id="3.40.50.720">
    <property type="entry name" value="NAD(P)-binding Rossmann-like Domain"/>
    <property type="match status" value="1"/>
</dbReference>
<dbReference type="HAMAP" id="MF_00102">
    <property type="entry name" value="DapB"/>
    <property type="match status" value="1"/>
</dbReference>
<dbReference type="InterPro" id="IPR022663">
    <property type="entry name" value="DapB_C"/>
</dbReference>
<dbReference type="InterPro" id="IPR000846">
    <property type="entry name" value="DapB_N"/>
</dbReference>
<dbReference type="InterPro" id="IPR022664">
    <property type="entry name" value="DapB_N_CS"/>
</dbReference>
<dbReference type="InterPro" id="IPR023940">
    <property type="entry name" value="DHDPR_bac"/>
</dbReference>
<dbReference type="InterPro" id="IPR036291">
    <property type="entry name" value="NAD(P)-bd_dom_sf"/>
</dbReference>
<dbReference type="NCBIfam" id="TIGR00036">
    <property type="entry name" value="dapB"/>
    <property type="match status" value="1"/>
</dbReference>
<dbReference type="PANTHER" id="PTHR20836:SF0">
    <property type="entry name" value="4-HYDROXY-TETRAHYDRODIPICOLINATE REDUCTASE 1, CHLOROPLASTIC-RELATED"/>
    <property type="match status" value="1"/>
</dbReference>
<dbReference type="PANTHER" id="PTHR20836">
    <property type="entry name" value="DIHYDRODIPICOLINATE REDUCTASE"/>
    <property type="match status" value="1"/>
</dbReference>
<dbReference type="Pfam" id="PF05173">
    <property type="entry name" value="DapB_C"/>
    <property type="match status" value="1"/>
</dbReference>
<dbReference type="Pfam" id="PF01113">
    <property type="entry name" value="DapB_N"/>
    <property type="match status" value="1"/>
</dbReference>
<dbReference type="PIRSF" id="PIRSF000161">
    <property type="entry name" value="DHPR"/>
    <property type="match status" value="1"/>
</dbReference>
<dbReference type="SUPFAM" id="SSF55347">
    <property type="entry name" value="Glyceraldehyde-3-phosphate dehydrogenase-like, C-terminal domain"/>
    <property type="match status" value="1"/>
</dbReference>
<dbReference type="SUPFAM" id="SSF51735">
    <property type="entry name" value="NAD(P)-binding Rossmann-fold domains"/>
    <property type="match status" value="1"/>
</dbReference>
<dbReference type="PROSITE" id="PS01298">
    <property type="entry name" value="DAPB"/>
    <property type="match status" value="1"/>
</dbReference>
<proteinExistence type="inferred from homology"/>
<protein>
    <recommendedName>
        <fullName evidence="1">4-hydroxy-tetrahydrodipicolinate reductase</fullName>
        <shortName evidence="1">HTPA reductase</shortName>
        <ecNumber evidence="1">1.17.1.8</ecNumber>
    </recommendedName>
</protein>
<name>DAPB_MYCUA</name>
<feature type="chain" id="PRO_1000008602" description="4-hydroxy-tetrahydrodipicolinate reductase">
    <location>
        <begin position="1"/>
        <end position="245"/>
    </location>
</feature>
<feature type="active site" description="Proton donor/acceptor" evidence="1">
    <location>
        <position position="132"/>
    </location>
</feature>
<feature type="active site" description="Proton donor" evidence="1">
    <location>
        <position position="136"/>
    </location>
</feature>
<feature type="binding site" evidence="1">
    <location>
        <begin position="7"/>
        <end position="12"/>
    </location>
    <ligand>
        <name>NAD(+)</name>
        <dbReference type="ChEBI" id="CHEBI:57540"/>
    </ligand>
</feature>
<feature type="binding site" evidence="1">
    <location>
        <begin position="75"/>
        <end position="77"/>
    </location>
    <ligand>
        <name>NAD(+)</name>
        <dbReference type="ChEBI" id="CHEBI:57540"/>
    </ligand>
</feature>
<feature type="binding site" evidence="1">
    <location>
        <begin position="102"/>
        <end position="105"/>
    </location>
    <ligand>
        <name>NAD(+)</name>
        <dbReference type="ChEBI" id="CHEBI:57540"/>
    </ligand>
</feature>
<feature type="binding site" evidence="1">
    <location>
        <position position="133"/>
    </location>
    <ligand>
        <name>(S)-2,3,4,5-tetrahydrodipicolinate</name>
        <dbReference type="ChEBI" id="CHEBI:16845"/>
    </ligand>
</feature>
<feature type="binding site" evidence="1">
    <location>
        <begin position="142"/>
        <end position="143"/>
    </location>
    <ligand>
        <name>(S)-2,3,4,5-tetrahydrodipicolinate</name>
        <dbReference type="ChEBI" id="CHEBI:16845"/>
    </ligand>
</feature>
<sequence>MRVGVLGAKGKVGATMVSAVESAADLTLSAEVDAGDPLSTLTETNTEAVIDFTHPDVVMGNLEFLIFNGIHAVVGTTGFTAERVEQVQSWLAKKPSTAVLIAPNFAIGAVLSMHFAKQAAPFFDSAEIIELHHPQKADAPSGTATRTAKLIAEAREGLAPNPDATSTSLPGARGADVDGIPVHAVRLAGLVAHQEVLFGTQGETLTIRHDSLDRTSFVPGVLLAVRRVRERPGLTIGIEPLLNLQ</sequence>
<keyword id="KW-0028">Amino-acid biosynthesis</keyword>
<keyword id="KW-0963">Cytoplasm</keyword>
<keyword id="KW-0220">Diaminopimelate biosynthesis</keyword>
<keyword id="KW-0457">Lysine biosynthesis</keyword>
<keyword id="KW-0520">NAD</keyword>
<keyword id="KW-0521">NADP</keyword>
<keyword id="KW-0560">Oxidoreductase</keyword>
<reference key="1">
    <citation type="journal article" date="2007" name="Genome Res.">
        <title>Reductive evolution and niche adaptation inferred from the genome of Mycobacterium ulcerans, the causative agent of Buruli ulcer.</title>
        <authorList>
            <person name="Stinear T.P."/>
            <person name="Seemann T."/>
            <person name="Pidot S."/>
            <person name="Frigui W."/>
            <person name="Reysset G."/>
            <person name="Garnier T."/>
            <person name="Meurice G."/>
            <person name="Simon D."/>
            <person name="Bouchier C."/>
            <person name="Ma L."/>
            <person name="Tichit M."/>
            <person name="Porter J.L."/>
            <person name="Ryan J."/>
            <person name="Johnson P.D.R."/>
            <person name="Davies J.K."/>
            <person name="Jenkin G.A."/>
            <person name="Small P.L.C."/>
            <person name="Jones L.M."/>
            <person name="Tekaia F."/>
            <person name="Laval F."/>
            <person name="Daffe M."/>
            <person name="Parkhill J."/>
            <person name="Cole S.T."/>
        </authorList>
    </citation>
    <scope>NUCLEOTIDE SEQUENCE [LARGE SCALE GENOMIC DNA]</scope>
    <source>
        <strain>Agy99</strain>
    </source>
</reference>
<organism>
    <name type="scientific">Mycobacterium ulcerans (strain Agy99)</name>
    <dbReference type="NCBI Taxonomy" id="362242"/>
    <lineage>
        <taxon>Bacteria</taxon>
        <taxon>Bacillati</taxon>
        <taxon>Actinomycetota</taxon>
        <taxon>Actinomycetes</taxon>
        <taxon>Mycobacteriales</taxon>
        <taxon>Mycobacteriaceae</taxon>
        <taxon>Mycobacterium</taxon>
        <taxon>Mycobacterium ulcerans group</taxon>
    </lineage>
</organism>
<accession>A0PQF8</accession>
<gene>
    <name evidence="1" type="primary">dapB</name>
    <name type="ordered locus">MUL_2164</name>
</gene>
<comment type="function">
    <text evidence="1">Catalyzes the conversion of 4-hydroxy-tetrahydrodipicolinate (HTPA) to tetrahydrodipicolinate.</text>
</comment>
<comment type="catalytic activity">
    <reaction evidence="1">
        <text>(S)-2,3,4,5-tetrahydrodipicolinate + NAD(+) + H2O = (2S,4S)-4-hydroxy-2,3,4,5-tetrahydrodipicolinate + NADH + H(+)</text>
        <dbReference type="Rhea" id="RHEA:35323"/>
        <dbReference type="ChEBI" id="CHEBI:15377"/>
        <dbReference type="ChEBI" id="CHEBI:15378"/>
        <dbReference type="ChEBI" id="CHEBI:16845"/>
        <dbReference type="ChEBI" id="CHEBI:57540"/>
        <dbReference type="ChEBI" id="CHEBI:57945"/>
        <dbReference type="ChEBI" id="CHEBI:67139"/>
        <dbReference type="EC" id="1.17.1.8"/>
    </reaction>
</comment>
<comment type="catalytic activity">
    <reaction evidence="1">
        <text>(S)-2,3,4,5-tetrahydrodipicolinate + NADP(+) + H2O = (2S,4S)-4-hydroxy-2,3,4,5-tetrahydrodipicolinate + NADPH + H(+)</text>
        <dbReference type="Rhea" id="RHEA:35331"/>
        <dbReference type="ChEBI" id="CHEBI:15377"/>
        <dbReference type="ChEBI" id="CHEBI:15378"/>
        <dbReference type="ChEBI" id="CHEBI:16845"/>
        <dbReference type="ChEBI" id="CHEBI:57783"/>
        <dbReference type="ChEBI" id="CHEBI:58349"/>
        <dbReference type="ChEBI" id="CHEBI:67139"/>
        <dbReference type="EC" id="1.17.1.8"/>
    </reaction>
</comment>
<comment type="pathway">
    <text evidence="1">Amino-acid biosynthesis; L-lysine biosynthesis via DAP pathway; (S)-tetrahydrodipicolinate from L-aspartate: step 4/4.</text>
</comment>
<comment type="subcellular location">
    <subcellularLocation>
        <location evidence="1">Cytoplasm</location>
    </subcellularLocation>
</comment>
<comment type="similarity">
    <text evidence="1">Belongs to the DapB family.</text>
</comment>
<comment type="caution">
    <text evidence="2">Was originally thought to be a dihydrodipicolinate reductase (DHDPR), catalyzing the conversion of dihydrodipicolinate to tetrahydrodipicolinate. However, it was shown in E.coli that the substrate of the enzymatic reaction is not dihydrodipicolinate (DHDP) but in fact (2S,4S)-4-hydroxy-2,3,4,5-tetrahydrodipicolinic acid (HTPA), the product released by the DapA-catalyzed reaction.</text>
</comment>